<gene>
    <name evidence="1" type="primary">apt</name>
    <name type="ordered locus">LGAS_0827</name>
</gene>
<dbReference type="EC" id="2.4.2.7" evidence="1"/>
<dbReference type="EMBL" id="CP000413">
    <property type="protein sequence ID" value="ABJ60218.1"/>
    <property type="molecule type" value="Genomic_DNA"/>
</dbReference>
<dbReference type="RefSeq" id="WP_003647467.1">
    <property type="nucleotide sequence ID" value="NZ_WBMG01000005.1"/>
</dbReference>
<dbReference type="SMR" id="Q044A4"/>
<dbReference type="KEGG" id="lga:LGAS_0827"/>
<dbReference type="HOGENOM" id="CLU_063339_3_0_9"/>
<dbReference type="BioCyc" id="LGAS324831:G1G6Y-821-MONOMER"/>
<dbReference type="UniPathway" id="UPA00588">
    <property type="reaction ID" value="UER00646"/>
</dbReference>
<dbReference type="Proteomes" id="UP000000664">
    <property type="component" value="Chromosome"/>
</dbReference>
<dbReference type="GO" id="GO:0005737">
    <property type="term" value="C:cytoplasm"/>
    <property type="evidence" value="ECO:0007669"/>
    <property type="project" value="UniProtKB-SubCell"/>
</dbReference>
<dbReference type="GO" id="GO:0002055">
    <property type="term" value="F:adenine binding"/>
    <property type="evidence" value="ECO:0007669"/>
    <property type="project" value="TreeGrafter"/>
</dbReference>
<dbReference type="GO" id="GO:0003999">
    <property type="term" value="F:adenine phosphoribosyltransferase activity"/>
    <property type="evidence" value="ECO:0007669"/>
    <property type="project" value="UniProtKB-UniRule"/>
</dbReference>
<dbReference type="GO" id="GO:0016208">
    <property type="term" value="F:AMP binding"/>
    <property type="evidence" value="ECO:0007669"/>
    <property type="project" value="TreeGrafter"/>
</dbReference>
<dbReference type="GO" id="GO:0006168">
    <property type="term" value="P:adenine salvage"/>
    <property type="evidence" value="ECO:0007669"/>
    <property type="project" value="InterPro"/>
</dbReference>
<dbReference type="GO" id="GO:0044209">
    <property type="term" value="P:AMP salvage"/>
    <property type="evidence" value="ECO:0007669"/>
    <property type="project" value="UniProtKB-UniRule"/>
</dbReference>
<dbReference type="GO" id="GO:0006166">
    <property type="term" value="P:purine ribonucleoside salvage"/>
    <property type="evidence" value="ECO:0007669"/>
    <property type="project" value="UniProtKB-KW"/>
</dbReference>
<dbReference type="CDD" id="cd06223">
    <property type="entry name" value="PRTases_typeI"/>
    <property type="match status" value="1"/>
</dbReference>
<dbReference type="FunFam" id="3.40.50.2020:FF:000004">
    <property type="entry name" value="Adenine phosphoribosyltransferase"/>
    <property type="match status" value="1"/>
</dbReference>
<dbReference type="Gene3D" id="3.40.50.2020">
    <property type="match status" value="1"/>
</dbReference>
<dbReference type="HAMAP" id="MF_00004">
    <property type="entry name" value="Aden_phosphoribosyltr"/>
    <property type="match status" value="1"/>
</dbReference>
<dbReference type="InterPro" id="IPR005764">
    <property type="entry name" value="Ade_phspho_trans"/>
</dbReference>
<dbReference type="InterPro" id="IPR000836">
    <property type="entry name" value="PRibTrfase_dom"/>
</dbReference>
<dbReference type="InterPro" id="IPR029057">
    <property type="entry name" value="PRTase-like"/>
</dbReference>
<dbReference type="InterPro" id="IPR050054">
    <property type="entry name" value="UPRTase/APRTase"/>
</dbReference>
<dbReference type="NCBIfam" id="TIGR01090">
    <property type="entry name" value="apt"/>
    <property type="match status" value="1"/>
</dbReference>
<dbReference type="NCBIfam" id="NF002633">
    <property type="entry name" value="PRK02304.1-2"/>
    <property type="match status" value="1"/>
</dbReference>
<dbReference type="NCBIfam" id="NF002634">
    <property type="entry name" value="PRK02304.1-3"/>
    <property type="match status" value="1"/>
</dbReference>
<dbReference type="NCBIfam" id="NF002636">
    <property type="entry name" value="PRK02304.1-5"/>
    <property type="match status" value="1"/>
</dbReference>
<dbReference type="PANTHER" id="PTHR32315">
    <property type="entry name" value="ADENINE PHOSPHORIBOSYLTRANSFERASE"/>
    <property type="match status" value="1"/>
</dbReference>
<dbReference type="PANTHER" id="PTHR32315:SF3">
    <property type="entry name" value="ADENINE PHOSPHORIBOSYLTRANSFERASE"/>
    <property type="match status" value="1"/>
</dbReference>
<dbReference type="Pfam" id="PF00156">
    <property type="entry name" value="Pribosyltran"/>
    <property type="match status" value="1"/>
</dbReference>
<dbReference type="SUPFAM" id="SSF53271">
    <property type="entry name" value="PRTase-like"/>
    <property type="match status" value="1"/>
</dbReference>
<dbReference type="PROSITE" id="PS00103">
    <property type="entry name" value="PUR_PYR_PR_TRANSFER"/>
    <property type="match status" value="1"/>
</dbReference>
<keyword id="KW-0963">Cytoplasm</keyword>
<keyword id="KW-0328">Glycosyltransferase</keyword>
<keyword id="KW-0660">Purine salvage</keyword>
<keyword id="KW-0808">Transferase</keyword>
<comment type="function">
    <text evidence="1">Catalyzes a salvage reaction resulting in the formation of AMP, that is energically less costly than de novo synthesis.</text>
</comment>
<comment type="catalytic activity">
    <reaction evidence="1">
        <text>AMP + diphosphate = 5-phospho-alpha-D-ribose 1-diphosphate + adenine</text>
        <dbReference type="Rhea" id="RHEA:16609"/>
        <dbReference type="ChEBI" id="CHEBI:16708"/>
        <dbReference type="ChEBI" id="CHEBI:33019"/>
        <dbReference type="ChEBI" id="CHEBI:58017"/>
        <dbReference type="ChEBI" id="CHEBI:456215"/>
        <dbReference type="EC" id="2.4.2.7"/>
    </reaction>
</comment>
<comment type="pathway">
    <text evidence="1">Purine metabolism; AMP biosynthesis via salvage pathway; AMP from adenine: step 1/1.</text>
</comment>
<comment type="subunit">
    <text evidence="1">Homodimer.</text>
</comment>
<comment type="subcellular location">
    <subcellularLocation>
        <location evidence="1">Cytoplasm</location>
    </subcellularLocation>
</comment>
<comment type="similarity">
    <text evidence="1">Belongs to the purine/pyrimidine phosphoribosyltransferase family.</text>
</comment>
<protein>
    <recommendedName>
        <fullName evidence="1">Adenine phosphoribosyltransferase</fullName>
        <shortName evidence="1">APRT</shortName>
        <ecNumber evidence="1">2.4.2.7</ecNumber>
    </recommendedName>
</protein>
<proteinExistence type="inferred from homology"/>
<accession>Q044A4</accession>
<organism>
    <name type="scientific">Lactobacillus gasseri (strain ATCC 33323 / DSM 20243 / BCRC 14619 / CIP 102991 / JCM 1131 / KCTC 3163 / NCIMB 11718 / NCTC 13722 / AM63)</name>
    <dbReference type="NCBI Taxonomy" id="324831"/>
    <lineage>
        <taxon>Bacteria</taxon>
        <taxon>Bacillati</taxon>
        <taxon>Bacillota</taxon>
        <taxon>Bacilli</taxon>
        <taxon>Lactobacillales</taxon>
        <taxon>Lactobacillaceae</taxon>
        <taxon>Lactobacillus</taxon>
    </lineage>
</organism>
<reference key="1">
    <citation type="journal article" date="2006" name="Proc. Natl. Acad. Sci. U.S.A.">
        <title>Comparative genomics of the lactic acid bacteria.</title>
        <authorList>
            <person name="Makarova K.S."/>
            <person name="Slesarev A."/>
            <person name="Wolf Y.I."/>
            <person name="Sorokin A."/>
            <person name="Mirkin B."/>
            <person name="Koonin E.V."/>
            <person name="Pavlov A."/>
            <person name="Pavlova N."/>
            <person name="Karamychev V."/>
            <person name="Polouchine N."/>
            <person name="Shakhova V."/>
            <person name="Grigoriev I."/>
            <person name="Lou Y."/>
            <person name="Rohksar D."/>
            <person name="Lucas S."/>
            <person name="Huang K."/>
            <person name="Goodstein D.M."/>
            <person name="Hawkins T."/>
            <person name="Plengvidhya V."/>
            <person name="Welker D."/>
            <person name="Hughes J."/>
            <person name="Goh Y."/>
            <person name="Benson A."/>
            <person name="Baldwin K."/>
            <person name="Lee J.-H."/>
            <person name="Diaz-Muniz I."/>
            <person name="Dosti B."/>
            <person name="Smeianov V."/>
            <person name="Wechter W."/>
            <person name="Barabote R."/>
            <person name="Lorca G."/>
            <person name="Altermann E."/>
            <person name="Barrangou R."/>
            <person name="Ganesan B."/>
            <person name="Xie Y."/>
            <person name="Rawsthorne H."/>
            <person name="Tamir D."/>
            <person name="Parker C."/>
            <person name="Breidt F."/>
            <person name="Broadbent J.R."/>
            <person name="Hutkins R."/>
            <person name="O'Sullivan D."/>
            <person name="Steele J."/>
            <person name="Unlu G."/>
            <person name="Saier M.H. Jr."/>
            <person name="Klaenhammer T."/>
            <person name="Richardson P."/>
            <person name="Kozyavkin S."/>
            <person name="Weimer B.C."/>
            <person name="Mills D.A."/>
        </authorList>
    </citation>
    <scope>NUCLEOTIDE SEQUENCE [LARGE SCALE GENOMIC DNA]</scope>
    <source>
        <strain>ATCC 33323 / DSM 20243 / BCRC 14619 / CIP 102991 / JCM 1131 / KCTC 3163 / NCIMB 11718 / NCTC 13722 / AM63</strain>
    </source>
</reference>
<sequence length="175" mass="19169">MAIDFKEHIASVKDFPNKGIIFRDITPILQDGKLYRAATHELAEYAKSRGAEVIVGPEARGFIVGCPVATELGIGFVPARKPHKLPREVESASYDLEYGSNVLEMHKDAIKPGQKVVICDDLMATAGTLHATKELIENLGGEVVGAAFYIELTDLKGREQFPDLDIYSLVKYHGA</sequence>
<feature type="chain" id="PRO_1000000299" description="Adenine phosphoribosyltransferase">
    <location>
        <begin position="1"/>
        <end position="175"/>
    </location>
</feature>
<name>APT_LACGA</name>
<evidence type="ECO:0000255" key="1">
    <source>
        <dbReference type="HAMAP-Rule" id="MF_00004"/>
    </source>
</evidence>